<comment type="function">
    <text>May be a sulfotransferase involved in the transport of sulfate. Displays very low rhodanese activity.</text>
</comment>
<comment type="catalytic activity">
    <reaction>
        <text>thiosulfate + hydrogen cyanide = thiocyanate + sulfite + 2 H(+)</text>
        <dbReference type="Rhea" id="RHEA:16881"/>
        <dbReference type="ChEBI" id="CHEBI:15378"/>
        <dbReference type="ChEBI" id="CHEBI:17359"/>
        <dbReference type="ChEBI" id="CHEBI:18022"/>
        <dbReference type="ChEBI" id="CHEBI:18407"/>
        <dbReference type="ChEBI" id="CHEBI:33542"/>
        <dbReference type="EC" id="2.8.1.1"/>
    </reaction>
</comment>
<comment type="subcellular location">
    <subcellularLocation>
        <location>Periplasm</location>
    </subcellularLocation>
</comment>
<comment type="induction">
    <text>By sulfur deprivation.</text>
</comment>
<comment type="domain">
    <text evidence="1">Contains two rhodanese domains with different primary structures but with near identical secondary structure conformations suggesting a common evolutionary origin. Only the C-terminal rhodanese domain contains the catalytic cysteine residue (By similarity).</text>
</comment>
<feature type="signal peptide" evidence="3">
    <location>
        <begin position="1"/>
        <end position="37"/>
    </location>
</feature>
<feature type="chain" id="PRO_0000030430" description="Putative thiosulfate sulfurtransferase">
    <location>
        <begin position="38"/>
        <end position="320"/>
    </location>
</feature>
<feature type="domain" description="Rhodanese 1" evidence="2">
    <location>
        <begin position="56"/>
        <end position="166"/>
    </location>
</feature>
<feature type="domain" description="Rhodanese 2" evidence="2">
    <location>
        <begin position="194"/>
        <end position="315"/>
    </location>
</feature>
<feature type="active site" description="Cysteine persulfide intermediate" evidence="2">
    <location>
        <position position="274"/>
    </location>
</feature>
<proteinExistence type="evidence at protein level"/>
<reference key="1">
    <citation type="journal article" date="1991" name="J. Bacteriol.">
        <title>Isolation and characterization of a sulfur-regulated gene encoding a periplasmically localized protein with sequence similarity to rhodanese.</title>
        <authorList>
            <person name="Laudenbach D.E."/>
            <person name="Ehrhardt D."/>
            <person name="Green L."/>
            <person name="Grossman A.R."/>
        </authorList>
    </citation>
    <scope>NUCLEOTIDE SEQUENCE [GENOMIC DNA]</scope>
    <scope>PROTEIN SEQUENCE OF 38-65</scope>
</reference>
<reference key="2">
    <citation type="submission" date="2005-08" db="EMBL/GenBank/DDBJ databases">
        <title>Complete sequence of chromosome 1 of Synechococcus elongatus PCC 7942.</title>
        <authorList>
            <consortium name="US DOE Joint Genome Institute"/>
            <person name="Copeland A."/>
            <person name="Lucas S."/>
            <person name="Lapidus A."/>
            <person name="Barry K."/>
            <person name="Detter J.C."/>
            <person name="Glavina T."/>
            <person name="Hammon N."/>
            <person name="Israni S."/>
            <person name="Pitluck S."/>
            <person name="Schmutz J."/>
            <person name="Larimer F."/>
            <person name="Land M."/>
            <person name="Kyrpides N."/>
            <person name="Lykidis A."/>
            <person name="Golden S."/>
            <person name="Richardson P."/>
        </authorList>
    </citation>
    <scope>NUCLEOTIDE SEQUENCE [LARGE SCALE GENOMIC DNA]</scope>
    <source>
        <strain>ATCC 33912 / PCC 7942 / FACHB-805</strain>
    </source>
</reference>
<evidence type="ECO:0000250" key="1"/>
<evidence type="ECO:0000255" key="2">
    <source>
        <dbReference type="PROSITE-ProRule" id="PRU00173"/>
    </source>
</evidence>
<evidence type="ECO:0000269" key="3">
    <source>
    </source>
</evidence>
<keyword id="KW-0903">Direct protein sequencing</keyword>
<keyword id="KW-0574">Periplasm</keyword>
<keyword id="KW-1185">Reference proteome</keyword>
<keyword id="KW-0677">Repeat</keyword>
<keyword id="KW-0732">Signal</keyword>
<keyword id="KW-0346">Stress response</keyword>
<keyword id="KW-0808">Transferase</keyword>
<gene>
    <name type="primary">rhdA</name>
    <name type="ordered locus">Synpcc7942_1689</name>
</gene>
<protein>
    <recommendedName>
        <fullName>Putative thiosulfate sulfurtransferase</fullName>
        <ecNumber>2.8.1.1</ecNumber>
    </recommendedName>
    <alternativeName>
        <fullName>Rhodanese-like protein</fullName>
    </alternativeName>
</protein>
<sequence length="320" mass="35114">MSVRSLRWPRQKAFLAVISLVVAVLLAVPGWLTPATAASQATVQFVAPTWAAERLNNKQLKILDVRTNPLAYIEGHLPGAVNIADAAYRGPNGFLPVQIWDPEKLASLFGRAGVSNNDTVLVYSDGNDVLGATLVAYLLERSGVQNIAVLDGGYKGYKDAGLPVTKEYPRYQAARFAPKDNRAFRVDIKQVEQLTGKSTFVDPRPPALFSGEQQVFIRNGHIPGARNIPWPTFTEANNANESLKNPHKLKPLSELKAILEAKGVTPDKDVIVTCSTGREASLQYLVLKHLLKYPKVRIYEGSWTEYSASNLPVETGPDRV</sequence>
<accession>P27477</accession>
<accession>Q31MK0</accession>
<organism>
    <name type="scientific">Synechococcus elongatus (strain ATCC 33912 / PCC 7942 / FACHB-805)</name>
    <name type="common">Anacystis nidulans R2</name>
    <dbReference type="NCBI Taxonomy" id="1140"/>
    <lineage>
        <taxon>Bacteria</taxon>
        <taxon>Bacillati</taxon>
        <taxon>Cyanobacteriota</taxon>
        <taxon>Cyanophyceae</taxon>
        <taxon>Synechococcales</taxon>
        <taxon>Synechococcaceae</taxon>
        <taxon>Synechococcus</taxon>
    </lineage>
</organism>
<dbReference type="EC" id="2.8.1.1"/>
<dbReference type="EMBL" id="M65244">
    <property type="protein sequence ID" value="AAA27364.1"/>
    <property type="molecule type" value="Genomic_DNA"/>
</dbReference>
<dbReference type="EMBL" id="CP000100">
    <property type="protein sequence ID" value="ABB57719.1"/>
    <property type="molecule type" value="Genomic_DNA"/>
</dbReference>
<dbReference type="RefSeq" id="WP_011244711.1">
    <property type="nucleotide sequence ID" value="NZ_JACJTX010000001.1"/>
</dbReference>
<dbReference type="SMR" id="P27477"/>
<dbReference type="STRING" id="1140.Synpcc7942_1689"/>
<dbReference type="PaxDb" id="1140-Synpcc7942_1689"/>
<dbReference type="KEGG" id="syf:Synpcc7942_1689"/>
<dbReference type="eggNOG" id="COG2897">
    <property type="taxonomic scope" value="Bacteria"/>
</dbReference>
<dbReference type="HOGENOM" id="CLU_031618_1_1_3"/>
<dbReference type="OrthoDB" id="9770030at2"/>
<dbReference type="BioCyc" id="SYNEL:SYNPCC7942_1689-MONOMER"/>
<dbReference type="Proteomes" id="UP000889800">
    <property type="component" value="Chromosome"/>
</dbReference>
<dbReference type="GO" id="GO:0042597">
    <property type="term" value="C:periplasmic space"/>
    <property type="evidence" value="ECO:0007669"/>
    <property type="project" value="UniProtKB-SubCell"/>
</dbReference>
<dbReference type="GO" id="GO:0004792">
    <property type="term" value="F:thiosulfate-cyanide sulfurtransferase activity"/>
    <property type="evidence" value="ECO:0007669"/>
    <property type="project" value="UniProtKB-EC"/>
</dbReference>
<dbReference type="CDD" id="cd01448">
    <property type="entry name" value="TST_Repeat_1"/>
    <property type="match status" value="1"/>
</dbReference>
<dbReference type="CDD" id="cd01449">
    <property type="entry name" value="TST_Repeat_2"/>
    <property type="match status" value="1"/>
</dbReference>
<dbReference type="Gene3D" id="3.40.250.10">
    <property type="entry name" value="Rhodanese-like domain"/>
    <property type="match status" value="2"/>
</dbReference>
<dbReference type="InterPro" id="IPR001763">
    <property type="entry name" value="Rhodanese-like_dom"/>
</dbReference>
<dbReference type="InterPro" id="IPR036873">
    <property type="entry name" value="Rhodanese-like_dom_sf"/>
</dbReference>
<dbReference type="InterPro" id="IPR051126">
    <property type="entry name" value="Thiosulfate_sulfurtransferase"/>
</dbReference>
<dbReference type="InterPro" id="IPR001307">
    <property type="entry name" value="Thiosulphate_STrfase_CS"/>
</dbReference>
<dbReference type="PANTHER" id="PTHR43855">
    <property type="entry name" value="THIOSULFATE SULFURTRANSFERASE"/>
    <property type="match status" value="1"/>
</dbReference>
<dbReference type="PANTHER" id="PTHR43855:SF1">
    <property type="entry name" value="THIOSULFATE SULFURTRANSFERASE"/>
    <property type="match status" value="1"/>
</dbReference>
<dbReference type="Pfam" id="PF00581">
    <property type="entry name" value="Rhodanese"/>
    <property type="match status" value="2"/>
</dbReference>
<dbReference type="SMART" id="SM00450">
    <property type="entry name" value="RHOD"/>
    <property type="match status" value="2"/>
</dbReference>
<dbReference type="SUPFAM" id="SSF52821">
    <property type="entry name" value="Rhodanese/Cell cycle control phosphatase"/>
    <property type="match status" value="2"/>
</dbReference>
<dbReference type="PROSITE" id="PS00380">
    <property type="entry name" value="RHODANESE_1"/>
    <property type="match status" value="1"/>
</dbReference>
<dbReference type="PROSITE" id="PS00683">
    <property type="entry name" value="RHODANESE_2"/>
    <property type="match status" value="1"/>
</dbReference>
<dbReference type="PROSITE" id="PS50206">
    <property type="entry name" value="RHODANESE_3"/>
    <property type="match status" value="2"/>
</dbReference>
<name>THTR_SYNE7</name>